<gene>
    <name evidence="1" type="primary">secA</name>
    <name type="ordered locus">Smal_0611</name>
</gene>
<name>SECA_STRM5</name>
<comment type="function">
    <text evidence="1">Part of the Sec protein translocase complex. Interacts with the SecYEG preprotein conducting channel. Has a central role in coupling the hydrolysis of ATP to the transfer of proteins into and across the cell membrane, serving both as a receptor for the preprotein-SecB complex and as an ATP-driven molecular motor driving the stepwise translocation of polypeptide chains across the membrane.</text>
</comment>
<comment type="catalytic activity">
    <reaction evidence="1">
        <text>ATP + H2O + cellular proteinSide 1 = ADP + phosphate + cellular proteinSide 2.</text>
        <dbReference type="EC" id="7.4.2.8"/>
    </reaction>
</comment>
<comment type="cofactor">
    <cofactor evidence="1">
        <name>Zn(2+)</name>
        <dbReference type="ChEBI" id="CHEBI:29105"/>
    </cofactor>
    <text evidence="1">May bind 1 zinc ion per subunit.</text>
</comment>
<comment type="subunit">
    <text evidence="1">Monomer and homodimer. Part of the essential Sec protein translocation apparatus which comprises SecA, SecYEG and auxiliary proteins SecDF-YajC and YidC.</text>
</comment>
<comment type="subcellular location">
    <subcellularLocation>
        <location evidence="1">Cell inner membrane</location>
        <topology evidence="1">Peripheral membrane protein</topology>
        <orientation evidence="1">Cytoplasmic side</orientation>
    </subcellularLocation>
    <subcellularLocation>
        <location evidence="1">Cytoplasm</location>
    </subcellularLocation>
    <text evidence="1">Distribution is 50-50.</text>
</comment>
<comment type="similarity">
    <text evidence="1">Belongs to the SecA family.</text>
</comment>
<sequence>MINSLLTRVFGSRNERQLRQLNRIVAKINALEPEIEKLSDEQLQAKTPEFKQRIADGEALDKVLPEAFAVCREAGRRVLGMRHYDVQLIGGMVLHLGKIAEMRTGEGKTLVATLPVYLNALEGKGVHVVTVNDYLARRDAAQMGKLYNWLGLSVGVVYPGMPHSDKREAYASDITYGTNNEFGFDYLRDNMALSKADRYQRGLHYAIVDEVDSILIDEARTPLIISGPADDSPELYIRVNRVVPNLVKQEAEDGEGDFWVDEKGKQVHLSEAGMEHAEQLLVEAGILDGETEGLYAPQNLTVVHHLNAALRAHAIYQRDVDYIVRDGEVVIVDEFTGRTLSGRRWSDGLHQAVEAKEGVPVQRENQTLASITFQNLFRMYKKLSGMTGTADTEAFEFQSIYGLEVVVIPTNRPTIRKDSPDQVFLNRKGKFNAVLADIEECAKRGQPVLVGTTSIETSEMLSEHLAKAGVKHEVLNAKQHDREATIVANAGRPAAVTIATNMAGRGTDIVLGGSLEAEIHELGEDATDAQKAAVKAEWQQRHDAVKAAGGLHIVGTERHESRRIDNQLRGRSGRQGDPGSSRFYLSLEDNLMRIFASDWVQKAMRMMGMKEDDVIEDRLVSRQIEKAQRKVEAHNFDIRKNLLDFDDVNNDQRKVIYAQRDELLDAESVKDNVDGIRDDVIFDIVARFVPPNSIDEQWDLRGLEATLESDFGLQMSLTGLVKEHEELDAEAIAAKVQERVNQHFAEKEAGVGEETMRALEKHVMLTVLDQSWKEHLARMDYLRQGIYLRGYAQKQPKQEYKKEAFELFSDMLENVKREVVTLLSRVRIRSDEEVQALEAAERQQVEARLSQSQFQHQDVGSYSADEEAAQVQAAQQGIAQVQRDEPKIGRNDPCPCGSGKKYKHCHGQLS</sequence>
<evidence type="ECO:0000255" key="1">
    <source>
        <dbReference type="HAMAP-Rule" id="MF_01382"/>
    </source>
</evidence>
<evidence type="ECO:0000256" key="2">
    <source>
        <dbReference type="SAM" id="MobiDB-lite"/>
    </source>
</evidence>
<accession>B4SJY4</accession>
<keyword id="KW-0067">ATP-binding</keyword>
<keyword id="KW-0997">Cell inner membrane</keyword>
<keyword id="KW-1003">Cell membrane</keyword>
<keyword id="KW-0963">Cytoplasm</keyword>
<keyword id="KW-0472">Membrane</keyword>
<keyword id="KW-0479">Metal-binding</keyword>
<keyword id="KW-0547">Nucleotide-binding</keyword>
<keyword id="KW-0653">Protein transport</keyword>
<keyword id="KW-1278">Translocase</keyword>
<keyword id="KW-0811">Translocation</keyword>
<keyword id="KW-0813">Transport</keyword>
<keyword id="KW-0862">Zinc</keyword>
<feature type="chain" id="PRO_1000145066" description="Protein translocase subunit SecA">
    <location>
        <begin position="1"/>
        <end position="910"/>
    </location>
</feature>
<feature type="region of interest" description="Disordered" evidence="2">
    <location>
        <begin position="558"/>
        <end position="580"/>
    </location>
</feature>
<feature type="region of interest" description="Disordered" evidence="2">
    <location>
        <begin position="873"/>
        <end position="910"/>
    </location>
</feature>
<feature type="compositionally biased region" description="Basic and acidic residues" evidence="2">
    <location>
        <begin position="558"/>
        <end position="568"/>
    </location>
</feature>
<feature type="compositionally biased region" description="Basic residues" evidence="2">
    <location>
        <begin position="900"/>
        <end position="910"/>
    </location>
</feature>
<feature type="binding site" evidence="1">
    <location>
        <position position="87"/>
    </location>
    <ligand>
        <name>ATP</name>
        <dbReference type="ChEBI" id="CHEBI:30616"/>
    </ligand>
</feature>
<feature type="binding site" evidence="1">
    <location>
        <begin position="105"/>
        <end position="109"/>
    </location>
    <ligand>
        <name>ATP</name>
        <dbReference type="ChEBI" id="CHEBI:30616"/>
    </ligand>
</feature>
<feature type="binding site" evidence="1">
    <location>
        <position position="508"/>
    </location>
    <ligand>
        <name>ATP</name>
        <dbReference type="ChEBI" id="CHEBI:30616"/>
    </ligand>
</feature>
<feature type="binding site" evidence="1">
    <location>
        <position position="894"/>
    </location>
    <ligand>
        <name>Zn(2+)</name>
        <dbReference type="ChEBI" id="CHEBI:29105"/>
    </ligand>
</feature>
<feature type="binding site" evidence="1">
    <location>
        <position position="896"/>
    </location>
    <ligand>
        <name>Zn(2+)</name>
        <dbReference type="ChEBI" id="CHEBI:29105"/>
    </ligand>
</feature>
<feature type="binding site" evidence="1">
    <location>
        <position position="905"/>
    </location>
    <ligand>
        <name>Zn(2+)</name>
        <dbReference type="ChEBI" id="CHEBI:29105"/>
    </ligand>
</feature>
<feature type="binding site" evidence="1">
    <location>
        <position position="906"/>
    </location>
    <ligand>
        <name>Zn(2+)</name>
        <dbReference type="ChEBI" id="CHEBI:29105"/>
    </ligand>
</feature>
<reference key="1">
    <citation type="submission" date="2008-06" db="EMBL/GenBank/DDBJ databases">
        <title>Complete sequence of Stenotrophomonas maltophilia R551-3.</title>
        <authorList>
            <consortium name="US DOE Joint Genome Institute"/>
            <person name="Lucas S."/>
            <person name="Copeland A."/>
            <person name="Lapidus A."/>
            <person name="Glavina del Rio T."/>
            <person name="Dalin E."/>
            <person name="Tice H."/>
            <person name="Pitluck S."/>
            <person name="Chain P."/>
            <person name="Malfatti S."/>
            <person name="Shin M."/>
            <person name="Vergez L."/>
            <person name="Lang D."/>
            <person name="Schmutz J."/>
            <person name="Larimer F."/>
            <person name="Land M."/>
            <person name="Hauser L."/>
            <person name="Kyrpides N."/>
            <person name="Mikhailova N."/>
            <person name="Taghavi S."/>
            <person name="Monchy S."/>
            <person name="Newman L."/>
            <person name="Vangronsveld J."/>
            <person name="van der Lelie D."/>
            <person name="Richardson P."/>
        </authorList>
    </citation>
    <scope>NUCLEOTIDE SEQUENCE [LARGE SCALE GENOMIC DNA]</scope>
    <source>
        <strain>R551-3</strain>
    </source>
</reference>
<dbReference type="EC" id="7.4.2.8" evidence="1"/>
<dbReference type="EMBL" id="CP001111">
    <property type="protein sequence ID" value="ACF50316.1"/>
    <property type="molecule type" value="Genomic_DNA"/>
</dbReference>
<dbReference type="RefSeq" id="WP_012510052.1">
    <property type="nucleotide sequence ID" value="NC_011071.1"/>
</dbReference>
<dbReference type="SMR" id="B4SJY4"/>
<dbReference type="STRING" id="391008.Smal_0611"/>
<dbReference type="KEGG" id="smt:Smal_0611"/>
<dbReference type="eggNOG" id="COG0653">
    <property type="taxonomic scope" value="Bacteria"/>
</dbReference>
<dbReference type="HOGENOM" id="CLU_005314_3_0_6"/>
<dbReference type="OrthoDB" id="9805579at2"/>
<dbReference type="Proteomes" id="UP000001867">
    <property type="component" value="Chromosome"/>
</dbReference>
<dbReference type="GO" id="GO:0031522">
    <property type="term" value="C:cell envelope Sec protein transport complex"/>
    <property type="evidence" value="ECO:0007669"/>
    <property type="project" value="TreeGrafter"/>
</dbReference>
<dbReference type="GO" id="GO:0005829">
    <property type="term" value="C:cytosol"/>
    <property type="evidence" value="ECO:0007669"/>
    <property type="project" value="TreeGrafter"/>
</dbReference>
<dbReference type="GO" id="GO:0005886">
    <property type="term" value="C:plasma membrane"/>
    <property type="evidence" value="ECO:0007669"/>
    <property type="project" value="UniProtKB-SubCell"/>
</dbReference>
<dbReference type="GO" id="GO:0005524">
    <property type="term" value="F:ATP binding"/>
    <property type="evidence" value="ECO:0007669"/>
    <property type="project" value="UniProtKB-UniRule"/>
</dbReference>
<dbReference type="GO" id="GO:0046872">
    <property type="term" value="F:metal ion binding"/>
    <property type="evidence" value="ECO:0007669"/>
    <property type="project" value="UniProtKB-KW"/>
</dbReference>
<dbReference type="GO" id="GO:0008564">
    <property type="term" value="F:protein-exporting ATPase activity"/>
    <property type="evidence" value="ECO:0007669"/>
    <property type="project" value="UniProtKB-EC"/>
</dbReference>
<dbReference type="GO" id="GO:0065002">
    <property type="term" value="P:intracellular protein transmembrane transport"/>
    <property type="evidence" value="ECO:0007669"/>
    <property type="project" value="UniProtKB-UniRule"/>
</dbReference>
<dbReference type="GO" id="GO:0017038">
    <property type="term" value="P:protein import"/>
    <property type="evidence" value="ECO:0007669"/>
    <property type="project" value="InterPro"/>
</dbReference>
<dbReference type="GO" id="GO:0006605">
    <property type="term" value="P:protein targeting"/>
    <property type="evidence" value="ECO:0007669"/>
    <property type="project" value="UniProtKB-UniRule"/>
</dbReference>
<dbReference type="GO" id="GO:0043952">
    <property type="term" value="P:protein transport by the Sec complex"/>
    <property type="evidence" value="ECO:0007669"/>
    <property type="project" value="TreeGrafter"/>
</dbReference>
<dbReference type="CDD" id="cd17928">
    <property type="entry name" value="DEXDc_SecA"/>
    <property type="match status" value="1"/>
</dbReference>
<dbReference type="CDD" id="cd18803">
    <property type="entry name" value="SF2_C_secA"/>
    <property type="match status" value="1"/>
</dbReference>
<dbReference type="FunFam" id="3.40.50.300:FF:000081">
    <property type="entry name" value="Preprotein translocase subunit SecA"/>
    <property type="match status" value="1"/>
</dbReference>
<dbReference type="FunFam" id="3.40.50.300:FF:000113">
    <property type="entry name" value="Preprotein translocase subunit SecA"/>
    <property type="match status" value="1"/>
</dbReference>
<dbReference type="FunFam" id="3.90.1440.10:FF:000001">
    <property type="entry name" value="Preprotein translocase subunit SecA"/>
    <property type="match status" value="1"/>
</dbReference>
<dbReference type="FunFam" id="1.10.3060.10:FF:000003">
    <property type="entry name" value="Protein translocase subunit SecA"/>
    <property type="match status" value="1"/>
</dbReference>
<dbReference type="Gene3D" id="1.10.3060.10">
    <property type="entry name" value="Helical scaffold and wing domains of SecA"/>
    <property type="match status" value="1"/>
</dbReference>
<dbReference type="Gene3D" id="3.40.50.300">
    <property type="entry name" value="P-loop containing nucleotide triphosphate hydrolases"/>
    <property type="match status" value="2"/>
</dbReference>
<dbReference type="Gene3D" id="3.90.1440.10">
    <property type="entry name" value="SecA, preprotein cross-linking domain"/>
    <property type="match status" value="1"/>
</dbReference>
<dbReference type="HAMAP" id="MF_01382">
    <property type="entry name" value="SecA"/>
    <property type="match status" value="1"/>
</dbReference>
<dbReference type="InterPro" id="IPR014001">
    <property type="entry name" value="Helicase_ATP-bd"/>
</dbReference>
<dbReference type="InterPro" id="IPR001650">
    <property type="entry name" value="Helicase_C-like"/>
</dbReference>
<dbReference type="InterPro" id="IPR027417">
    <property type="entry name" value="P-loop_NTPase"/>
</dbReference>
<dbReference type="InterPro" id="IPR004027">
    <property type="entry name" value="SEC_C_motif"/>
</dbReference>
<dbReference type="InterPro" id="IPR000185">
    <property type="entry name" value="SecA"/>
</dbReference>
<dbReference type="InterPro" id="IPR020937">
    <property type="entry name" value="SecA_CS"/>
</dbReference>
<dbReference type="InterPro" id="IPR011115">
    <property type="entry name" value="SecA_DEAD"/>
</dbReference>
<dbReference type="InterPro" id="IPR014018">
    <property type="entry name" value="SecA_motor_DEAD"/>
</dbReference>
<dbReference type="InterPro" id="IPR011130">
    <property type="entry name" value="SecA_preprotein_X-link_dom"/>
</dbReference>
<dbReference type="InterPro" id="IPR044722">
    <property type="entry name" value="SecA_SF2_C"/>
</dbReference>
<dbReference type="InterPro" id="IPR011116">
    <property type="entry name" value="SecA_Wing/Scaffold"/>
</dbReference>
<dbReference type="InterPro" id="IPR036266">
    <property type="entry name" value="SecA_Wing/Scaffold_sf"/>
</dbReference>
<dbReference type="InterPro" id="IPR036670">
    <property type="entry name" value="SecA_X-link_sf"/>
</dbReference>
<dbReference type="NCBIfam" id="NF009538">
    <property type="entry name" value="PRK12904.1"/>
    <property type="match status" value="1"/>
</dbReference>
<dbReference type="NCBIfam" id="TIGR00963">
    <property type="entry name" value="secA"/>
    <property type="match status" value="1"/>
</dbReference>
<dbReference type="PANTHER" id="PTHR30612:SF0">
    <property type="entry name" value="CHLOROPLAST PROTEIN-TRANSPORTING ATPASE"/>
    <property type="match status" value="1"/>
</dbReference>
<dbReference type="PANTHER" id="PTHR30612">
    <property type="entry name" value="SECA INNER MEMBRANE COMPONENT OF SEC PROTEIN SECRETION SYSTEM"/>
    <property type="match status" value="1"/>
</dbReference>
<dbReference type="Pfam" id="PF21090">
    <property type="entry name" value="P-loop_SecA"/>
    <property type="match status" value="1"/>
</dbReference>
<dbReference type="Pfam" id="PF02810">
    <property type="entry name" value="SEC-C"/>
    <property type="match status" value="1"/>
</dbReference>
<dbReference type="Pfam" id="PF07517">
    <property type="entry name" value="SecA_DEAD"/>
    <property type="match status" value="1"/>
</dbReference>
<dbReference type="Pfam" id="PF01043">
    <property type="entry name" value="SecA_PP_bind"/>
    <property type="match status" value="1"/>
</dbReference>
<dbReference type="Pfam" id="PF07516">
    <property type="entry name" value="SecA_SW"/>
    <property type="match status" value="1"/>
</dbReference>
<dbReference type="PRINTS" id="PR00906">
    <property type="entry name" value="SECA"/>
</dbReference>
<dbReference type="SMART" id="SM00957">
    <property type="entry name" value="SecA_DEAD"/>
    <property type="match status" value="1"/>
</dbReference>
<dbReference type="SMART" id="SM00958">
    <property type="entry name" value="SecA_PP_bind"/>
    <property type="match status" value="1"/>
</dbReference>
<dbReference type="SUPFAM" id="SSF81886">
    <property type="entry name" value="Helical scaffold and wing domains of SecA"/>
    <property type="match status" value="1"/>
</dbReference>
<dbReference type="SUPFAM" id="SSF52540">
    <property type="entry name" value="P-loop containing nucleoside triphosphate hydrolases"/>
    <property type="match status" value="2"/>
</dbReference>
<dbReference type="SUPFAM" id="SSF81767">
    <property type="entry name" value="Pre-protein crosslinking domain of SecA"/>
    <property type="match status" value="1"/>
</dbReference>
<dbReference type="PROSITE" id="PS01312">
    <property type="entry name" value="SECA"/>
    <property type="match status" value="1"/>
</dbReference>
<dbReference type="PROSITE" id="PS51196">
    <property type="entry name" value="SECA_MOTOR_DEAD"/>
    <property type="match status" value="1"/>
</dbReference>
<organism>
    <name type="scientific">Stenotrophomonas maltophilia (strain R551-3)</name>
    <dbReference type="NCBI Taxonomy" id="391008"/>
    <lineage>
        <taxon>Bacteria</taxon>
        <taxon>Pseudomonadati</taxon>
        <taxon>Pseudomonadota</taxon>
        <taxon>Gammaproteobacteria</taxon>
        <taxon>Lysobacterales</taxon>
        <taxon>Lysobacteraceae</taxon>
        <taxon>Stenotrophomonas</taxon>
        <taxon>Stenotrophomonas maltophilia group</taxon>
    </lineage>
</organism>
<proteinExistence type="inferred from homology"/>
<protein>
    <recommendedName>
        <fullName evidence="1">Protein translocase subunit SecA</fullName>
        <ecNumber evidence="1">7.4.2.8</ecNumber>
    </recommendedName>
</protein>